<protein>
    <recommendedName>
        <fullName evidence="1">Protein SlyX homolog</fullName>
    </recommendedName>
</protein>
<reference key="1">
    <citation type="submission" date="2002-12" db="EMBL/GenBank/DDBJ databases">
        <title>Complete genome sequence of Vibrio vulnificus CMCP6.</title>
        <authorList>
            <person name="Rhee J.H."/>
            <person name="Kim S.Y."/>
            <person name="Chung S.S."/>
            <person name="Kim J.J."/>
            <person name="Moon Y.H."/>
            <person name="Jeong H."/>
            <person name="Choy H.E."/>
        </authorList>
    </citation>
    <scope>NUCLEOTIDE SEQUENCE [LARGE SCALE GENOMIC DNA]</scope>
    <source>
        <strain>CMCP6</strain>
    </source>
</reference>
<proteinExistence type="inferred from homology"/>
<name>SLYX_VIBVU</name>
<evidence type="ECO:0000255" key="1">
    <source>
        <dbReference type="HAMAP-Rule" id="MF_00715"/>
    </source>
</evidence>
<accession>Q8DCR7</accession>
<gene>
    <name evidence="1" type="primary">slyX</name>
    <name type="ordered locus">VV1_1329</name>
</gene>
<comment type="similarity">
    <text evidence="1">Belongs to the SlyX family.</text>
</comment>
<sequence length="75" mass="8637">MTEKTIALLENRINDLECQVAFQEQTIEELNDALTQQQLLIAKMQDQMKYVVGKMKNMDSSNMVDPAKEPPPPHY</sequence>
<dbReference type="EMBL" id="AE016795">
    <property type="protein sequence ID" value="AAO09783.2"/>
    <property type="molecule type" value="Genomic_DNA"/>
</dbReference>
<dbReference type="RefSeq" id="WP_011079308.1">
    <property type="nucleotide sequence ID" value="NC_004459.3"/>
</dbReference>
<dbReference type="SMR" id="Q8DCR7"/>
<dbReference type="KEGG" id="vvu:VV1_1329"/>
<dbReference type="HOGENOM" id="CLU_180796_4_0_6"/>
<dbReference type="Proteomes" id="UP000002275">
    <property type="component" value="Chromosome 1"/>
</dbReference>
<dbReference type="Gene3D" id="1.20.5.300">
    <property type="match status" value="1"/>
</dbReference>
<dbReference type="HAMAP" id="MF_00715">
    <property type="entry name" value="SlyX"/>
    <property type="match status" value="1"/>
</dbReference>
<dbReference type="InterPro" id="IPR007236">
    <property type="entry name" value="SlyX"/>
</dbReference>
<dbReference type="NCBIfam" id="NF003357">
    <property type="entry name" value="PRK04406.1"/>
    <property type="match status" value="1"/>
</dbReference>
<dbReference type="PANTHER" id="PTHR36508">
    <property type="entry name" value="PROTEIN SLYX"/>
    <property type="match status" value="1"/>
</dbReference>
<dbReference type="PANTHER" id="PTHR36508:SF1">
    <property type="entry name" value="PROTEIN SLYX"/>
    <property type="match status" value="1"/>
</dbReference>
<dbReference type="Pfam" id="PF04102">
    <property type="entry name" value="SlyX"/>
    <property type="match status" value="1"/>
</dbReference>
<feature type="chain" id="PRO_0000209218" description="Protein SlyX homolog">
    <location>
        <begin position="1"/>
        <end position="75"/>
    </location>
</feature>
<organism>
    <name type="scientific">Vibrio vulnificus (strain CMCP6)</name>
    <dbReference type="NCBI Taxonomy" id="216895"/>
    <lineage>
        <taxon>Bacteria</taxon>
        <taxon>Pseudomonadati</taxon>
        <taxon>Pseudomonadota</taxon>
        <taxon>Gammaproteobacteria</taxon>
        <taxon>Vibrionales</taxon>
        <taxon>Vibrionaceae</taxon>
        <taxon>Vibrio</taxon>
    </lineage>
</organism>